<comment type="function">
    <text evidence="1">Component of the mitochondrial ribosome (mitoribosome), a dedicated translation machinery responsible for the synthesis of mitochondrial genome-encoded proteins, including at least some of the essential transmembrane subunits of the mitochondrial respiratory chain. The mitoribosomes are attached to the mitochondrial inner membrane and translation products are cotranslationally integrated into the membrane.</text>
</comment>
<comment type="subunit">
    <text evidence="1">Component of the mitochondrial small ribosomal subunit (mt-SSU). Mature yeast 74S mitochondrial ribosomes consist of a small (37S) and a large (54S) subunit. The 37S small subunit contains a 15S ribosomal RNA (15S mt-rRNA) and at least 32 different proteins. The 54S large subunit contains a 21S rRNA (21S mt-rRNA) and at least 45 different proteins.</text>
</comment>
<comment type="subcellular location">
    <subcellularLocation>
        <location evidence="2">Mitochondrion</location>
    </subcellularLocation>
</comment>
<comment type="similarity">
    <text evidence="3">Belongs to the universal ribosomal protein uS13 family.</text>
</comment>
<dbReference type="EMBL" id="CU329672">
    <property type="protein sequence ID" value="CAA18642.1"/>
    <property type="molecule type" value="Genomic_DNA"/>
</dbReference>
<dbReference type="PIR" id="T41136">
    <property type="entry name" value="T41136"/>
</dbReference>
<dbReference type="RefSeq" id="NP_588037.1">
    <property type="nucleotide sequence ID" value="NM_001023029.2"/>
</dbReference>
<dbReference type="SMR" id="O59772"/>
<dbReference type="BioGRID" id="275518">
    <property type="interactions" value="2"/>
</dbReference>
<dbReference type="ComplexPortal" id="CPX-10315">
    <property type="entry name" value="37S mitochondrial small ribosomal subunit"/>
</dbReference>
<dbReference type="FunCoup" id="O59772">
    <property type="interactions" value="252"/>
</dbReference>
<dbReference type="STRING" id="284812.O59772"/>
<dbReference type="PaxDb" id="4896-SPCC1795.07.1"/>
<dbReference type="EnsemblFungi" id="SPCC1795.07.1">
    <property type="protein sequence ID" value="SPCC1795.07.1:pep"/>
    <property type="gene ID" value="SPCC1795.07"/>
</dbReference>
<dbReference type="GeneID" id="2538943"/>
<dbReference type="KEGG" id="spo:2538943"/>
<dbReference type="PomBase" id="SPCC1795.07">
    <property type="gene designation" value="sws2"/>
</dbReference>
<dbReference type="VEuPathDB" id="FungiDB:SPCC1795.07"/>
<dbReference type="eggNOG" id="KOG3311">
    <property type="taxonomic scope" value="Eukaryota"/>
</dbReference>
<dbReference type="HOGENOM" id="CLU_103849_2_3_1"/>
<dbReference type="InParanoid" id="O59772"/>
<dbReference type="OMA" id="MNVKRLM"/>
<dbReference type="PhylomeDB" id="O59772"/>
<dbReference type="PRO" id="PR:O59772"/>
<dbReference type="Proteomes" id="UP000002485">
    <property type="component" value="Chromosome III"/>
</dbReference>
<dbReference type="GO" id="GO:0005763">
    <property type="term" value="C:mitochondrial small ribosomal subunit"/>
    <property type="evidence" value="ECO:0000266"/>
    <property type="project" value="PomBase"/>
</dbReference>
<dbReference type="GO" id="GO:0005739">
    <property type="term" value="C:mitochondrion"/>
    <property type="evidence" value="ECO:0007005"/>
    <property type="project" value="PomBase"/>
</dbReference>
<dbReference type="GO" id="GO:0015935">
    <property type="term" value="C:small ribosomal subunit"/>
    <property type="evidence" value="ECO:0000318"/>
    <property type="project" value="GO_Central"/>
</dbReference>
<dbReference type="GO" id="GO:0019843">
    <property type="term" value="F:rRNA binding"/>
    <property type="evidence" value="ECO:0007669"/>
    <property type="project" value="UniProtKB-KW"/>
</dbReference>
<dbReference type="GO" id="GO:0003735">
    <property type="term" value="F:structural constituent of ribosome"/>
    <property type="evidence" value="ECO:0000266"/>
    <property type="project" value="PomBase"/>
</dbReference>
<dbReference type="GO" id="GO:0032543">
    <property type="term" value="P:mitochondrial translation"/>
    <property type="evidence" value="ECO:0000266"/>
    <property type="project" value="PomBase"/>
</dbReference>
<dbReference type="FunFam" id="1.10.8.50:FF:000001">
    <property type="entry name" value="30S ribosomal protein S13"/>
    <property type="match status" value="1"/>
</dbReference>
<dbReference type="Gene3D" id="1.10.8.50">
    <property type="match status" value="1"/>
</dbReference>
<dbReference type="Gene3D" id="4.10.910.10">
    <property type="entry name" value="30s ribosomal protein s13, domain 2"/>
    <property type="match status" value="1"/>
</dbReference>
<dbReference type="HAMAP" id="MF_01315">
    <property type="entry name" value="Ribosomal_uS13"/>
    <property type="match status" value="1"/>
</dbReference>
<dbReference type="InterPro" id="IPR027437">
    <property type="entry name" value="Rbsml_uS13_C"/>
</dbReference>
<dbReference type="InterPro" id="IPR001892">
    <property type="entry name" value="Ribosomal_uS13"/>
</dbReference>
<dbReference type="InterPro" id="IPR010979">
    <property type="entry name" value="Ribosomal_uS13-like_H2TH"/>
</dbReference>
<dbReference type="InterPro" id="IPR018269">
    <property type="entry name" value="Ribosomal_uS13_CS"/>
</dbReference>
<dbReference type="PANTHER" id="PTHR10871">
    <property type="entry name" value="30S RIBOSOMAL PROTEIN S13/40S RIBOSOMAL PROTEIN S18"/>
    <property type="match status" value="1"/>
</dbReference>
<dbReference type="PANTHER" id="PTHR10871:SF1">
    <property type="entry name" value="SMALL RIBOSOMAL SUBUNIT PROTEIN US13M"/>
    <property type="match status" value="1"/>
</dbReference>
<dbReference type="Pfam" id="PF00416">
    <property type="entry name" value="Ribosomal_S13"/>
    <property type="match status" value="1"/>
</dbReference>
<dbReference type="PIRSF" id="PIRSF002134">
    <property type="entry name" value="Ribosomal_S13"/>
    <property type="match status" value="1"/>
</dbReference>
<dbReference type="SUPFAM" id="SSF46946">
    <property type="entry name" value="S13-like H2TH domain"/>
    <property type="match status" value="1"/>
</dbReference>
<dbReference type="PROSITE" id="PS00646">
    <property type="entry name" value="RIBOSOMAL_S13_1"/>
    <property type="match status" value="1"/>
</dbReference>
<dbReference type="PROSITE" id="PS50159">
    <property type="entry name" value="RIBOSOMAL_S13_2"/>
    <property type="match status" value="1"/>
</dbReference>
<name>SWS2_SCHPO</name>
<organism>
    <name type="scientific">Schizosaccharomyces pombe (strain 972 / ATCC 24843)</name>
    <name type="common">Fission yeast</name>
    <dbReference type="NCBI Taxonomy" id="284812"/>
    <lineage>
        <taxon>Eukaryota</taxon>
        <taxon>Fungi</taxon>
        <taxon>Dikarya</taxon>
        <taxon>Ascomycota</taxon>
        <taxon>Taphrinomycotina</taxon>
        <taxon>Schizosaccharomycetes</taxon>
        <taxon>Schizosaccharomycetales</taxon>
        <taxon>Schizosaccharomycetaceae</taxon>
        <taxon>Schizosaccharomyces</taxon>
    </lineage>
</organism>
<protein>
    <recommendedName>
        <fullName evidence="3">Small ribosomal subunit protein uS13m</fullName>
    </recommendedName>
    <alternativeName>
        <fullName>37S ribosomal protein subunit sws2, mitochondrial</fullName>
    </alternativeName>
</protein>
<sequence>MVYILGVAVNDDKPVRFALLSFYGIGHAKAEEICAKLSFHNTLRVRELTNVQLTTLSQLLSGMTIEGDLRRQRNADISRLVNIRCYRGMRHVNGLPVNGQNTRTNAKTAKKLNKVPRRGYMTLSPASTRPITWSFCLPRMVSVFQKLKHIH</sequence>
<evidence type="ECO:0000250" key="1">
    <source>
        <dbReference type="UniProtKB" id="P53937"/>
    </source>
</evidence>
<evidence type="ECO:0000269" key="2">
    <source>
    </source>
</evidence>
<evidence type="ECO:0000305" key="3"/>
<accession>O59772</accession>
<gene>
    <name type="primary">sws2</name>
    <name type="ORF">SPCC1795.07</name>
</gene>
<reference key="1">
    <citation type="journal article" date="2002" name="Nature">
        <title>The genome sequence of Schizosaccharomyces pombe.</title>
        <authorList>
            <person name="Wood V."/>
            <person name="Gwilliam R."/>
            <person name="Rajandream M.A."/>
            <person name="Lyne M.H."/>
            <person name="Lyne R."/>
            <person name="Stewart A."/>
            <person name="Sgouros J.G."/>
            <person name="Peat N."/>
            <person name="Hayles J."/>
            <person name="Baker S.G."/>
            <person name="Basham D."/>
            <person name="Bowman S."/>
            <person name="Brooks K."/>
            <person name="Brown D."/>
            <person name="Brown S."/>
            <person name="Chillingworth T."/>
            <person name="Churcher C.M."/>
            <person name="Collins M."/>
            <person name="Connor R."/>
            <person name="Cronin A."/>
            <person name="Davis P."/>
            <person name="Feltwell T."/>
            <person name="Fraser A."/>
            <person name="Gentles S."/>
            <person name="Goble A."/>
            <person name="Hamlin N."/>
            <person name="Harris D.E."/>
            <person name="Hidalgo J."/>
            <person name="Hodgson G."/>
            <person name="Holroyd S."/>
            <person name="Hornsby T."/>
            <person name="Howarth S."/>
            <person name="Huckle E.J."/>
            <person name="Hunt S."/>
            <person name="Jagels K."/>
            <person name="James K.D."/>
            <person name="Jones L."/>
            <person name="Jones M."/>
            <person name="Leather S."/>
            <person name="McDonald S."/>
            <person name="McLean J."/>
            <person name="Mooney P."/>
            <person name="Moule S."/>
            <person name="Mungall K.L."/>
            <person name="Murphy L.D."/>
            <person name="Niblett D."/>
            <person name="Odell C."/>
            <person name="Oliver K."/>
            <person name="O'Neil S."/>
            <person name="Pearson D."/>
            <person name="Quail M.A."/>
            <person name="Rabbinowitsch E."/>
            <person name="Rutherford K.M."/>
            <person name="Rutter S."/>
            <person name="Saunders D."/>
            <person name="Seeger K."/>
            <person name="Sharp S."/>
            <person name="Skelton J."/>
            <person name="Simmonds M.N."/>
            <person name="Squares R."/>
            <person name="Squares S."/>
            <person name="Stevens K."/>
            <person name="Taylor K."/>
            <person name="Taylor R.G."/>
            <person name="Tivey A."/>
            <person name="Walsh S.V."/>
            <person name="Warren T."/>
            <person name="Whitehead S."/>
            <person name="Woodward J.R."/>
            <person name="Volckaert G."/>
            <person name="Aert R."/>
            <person name="Robben J."/>
            <person name="Grymonprez B."/>
            <person name="Weltjens I."/>
            <person name="Vanstreels E."/>
            <person name="Rieger M."/>
            <person name="Schaefer M."/>
            <person name="Mueller-Auer S."/>
            <person name="Gabel C."/>
            <person name="Fuchs M."/>
            <person name="Duesterhoeft A."/>
            <person name="Fritzc C."/>
            <person name="Holzer E."/>
            <person name="Moestl D."/>
            <person name="Hilbert H."/>
            <person name="Borzym K."/>
            <person name="Langer I."/>
            <person name="Beck A."/>
            <person name="Lehrach H."/>
            <person name="Reinhardt R."/>
            <person name="Pohl T.M."/>
            <person name="Eger P."/>
            <person name="Zimmermann W."/>
            <person name="Wedler H."/>
            <person name="Wambutt R."/>
            <person name="Purnelle B."/>
            <person name="Goffeau A."/>
            <person name="Cadieu E."/>
            <person name="Dreano S."/>
            <person name="Gloux S."/>
            <person name="Lelaure V."/>
            <person name="Mottier S."/>
            <person name="Galibert F."/>
            <person name="Aves S.J."/>
            <person name="Xiang Z."/>
            <person name="Hunt C."/>
            <person name="Moore K."/>
            <person name="Hurst S.M."/>
            <person name="Lucas M."/>
            <person name="Rochet M."/>
            <person name="Gaillardin C."/>
            <person name="Tallada V.A."/>
            <person name="Garzon A."/>
            <person name="Thode G."/>
            <person name="Daga R.R."/>
            <person name="Cruzado L."/>
            <person name="Jimenez J."/>
            <person name="Sanchez M."/>
            <person name="del Rey F."/>
            <person name="Benito J."/>
            <person name="Dominguez A."/>
            <person name="Revuelta J.L."/>
            <person name="Moreno S."/>
            <person name="Armstrong J."/>
            <person name="Forsburg S.L."/>
            <person name="Cerutti L."/>
            <person name="Lowe T."/>
            <person name="McCombie W.R."/>
            <person name="Paulsen I."/>
            <person name="Potashkin J."/>
            <person name="Shpakovski G.V."/>
            <person name="Ussery D."/>
            <person name="Barrell B.G."/>
            <person name="Nurse P."/>
        </authorList>
    </citation>
    <scope>NUCLEOTIDE SEQUENCE [LARGE SCALE GENOMIC DNA]</scope>
    <source>
        <strain>972 / ATCC 24843</strain>
    </source>
</reference>
<reference key="2">
    <citation type="journal article" date="2006" name="Nat. Biotechnol.">
        <title>ORFeome cloning and global analysis of protein localization in the fission yeast Schizosaccharomyces pombe.</title>
        <authorList>
            <person name="Matsuyama A."/>
            <person name="Arai R."/>
            <person name="Yashiroda Y."/>
            <person name="Shirai A."/>
            <person name="Kamata A."/>
            <person name="Sekido S."/>
            <person name="Kobayashi Y."/>
            <person name="Hashimoto A."/>
            <person name="Hamamoto M."/>
            <person name="Hiraoka Y."/>
            <person name="Horinouchi S."/>
            <person name="Yoshida M."/>
        </authorList>
    </citation>
    <scope>SUBCELLULAR LOCATION [LARGE SCALE ANALYSIS]</scope>
</reference>
<feature type="chain" id="PRO_0000315966" description="Small ribosomal subunit protein uS13m">
    <location>
        <begin position="1"/>
        <end position="151"/>
    </location>
</feature>
<keyword id="KW-0496">Mitochondrion</keyword>
<keyword id="KW-1185">Reference proteome</keyword>
<keyword id="KW-0687">Ribonucleoprotein</keyword>
<keyword id="KW-0689">Ribosomal protein</keyword>
<keyword id="KW-0694">RNA-binding</keyword>
<keyword id="KW-0699">rRNA-binding</keyword>
<proteinExistence type="inferred from homology"/>